<name>PGP_PYRHO</name>
<reference key="1">
    <citation type="journal article" date="1998" name="DNA Res.">
        <title>Complete sequence and gene organization of the genome of a hyper-thermophilic archaebacterium, Pyrococcus horikoshii OT3.</title>
        <authorList>
            <person name="Kawarabayasi Y."/>
            <person name="Sawada M."/>
            <person name="Horikawa H."/>
            <person name="Haikawa Y."/>
            <person name="Hino Y."/>
            <person name="Yamamoto S."/>
            <person name="Sekine M."/>
            <person name="Baba S."/>
            <person name="Kosugi H."/>
            <person name="Hosoyama A."/>
            <person name="Nagai Y."/>
            <person name="Sakai M."/>
            <person name="Ogura K."/>
            <person name="Otsuka R."/>
            <person name="Nakazawa H."/>
            <person name="Takamiya M."/>
            <person name="Ohfuku Y."/>
            <person name="Funahashi T."/>
            <person name="Tanaka T."/>
            <person name="Kudoh Y."/>
            <person name="Yamazaki J."/>
            <person name="Kushida N."/>
            <person name="Oguchi A."/>
            <person name="Aoki K."/>
            <person name="Yoshizawa T."/>
            <person name="Nakamura Y."/>
            <person name="Robb F.T."/>
            <person name="Horikoshi K."/>
            <person name="Masuchi Y."/>
            <person name="Shizuya H."/>
            <person name="Kikuchi H."/>
        </authorList>
    </citation>
    <scope>NUCLEOTIDE SEQUENCE [LARGE SCALE GENOMIC DNA]</scope>
    <source>
        <strain>ATCC 700860 / DSM 12428 / JCM 9974 / NBRC 100139 / OT-3</strain>
    </source>
</reference>
<reference key="2">
    <citation type="journal article" date="2008" name="Acta Crystallogr. D">
        <title>Structure of a haloacid dehalogenase superfamily phosphatase PH1421 from Pyrococcus horikoshii OT3: oligomeric state and thermoadaptation mechanism.</title>
        <authorList>
            <person name="Yamamoto H."/>
            <person name="Takio K."/>
            <person name="Sugahara M."/>
            <person name="Kunishima N."/>
        </authorList>
    </citation>
    <scope>X-RAY CRYSTALLOGRAPHY (1.60 ANGSTROMS)</scope>
    <scope>SUBUNIT</scope>
    <scope>CATALYTIC ACTIVITY</scope>
    <scope>COFACTOR</scope>
</reference>
<sequence>MKIKAISIDIDGTITYPNRMIHEKALEAIRRAESLGIPIMLVTGNTVQFAEAASILIGTSGPVVAEDGGAISYKKKRIFLASMDEEWILWNEIRKRFPNARTSYTMPDRRAGLVIMRETINVETVREIINELNLNLVAVDSGFAIHVKKPWINKGSGIEKASEFLGIKPKEVAHVGDGENDLDAFKVVGYKVAVAQAPKILKENADYVTKKEYGEGGAEAIYHILEKFGYL</sequence>
<protein>
    <recommendedName>
        <fullName evidence="2">Phosphoglycolate phosphatase</fullName>
        <shortName evidence="2">PGP</shortName>
        <shortName evidence="2">PGPase</shortName>
        <ecNumber evidence="2">3.1.3.18</ecNumber>
    </recommendedName>
</protein>
<organism>
    <name type="scientific">Pyrococcus horikoshii (strain ATCC 700860 / DSM 12428 / JCM 9974 / NBRC 100139 / OT-3)</name>
    <dbReference type="NCBI Taxonomy" id="70601"/>
    <lineage>
        <taxon>Archaea</taxon>
        <taxon>Methanobacteriati</taxon>
        <taxon>Methanobacteriota</taxon>
        <taxon>Thermococci</taxon>
        <taxon>Thermococcales</taxon>
        <taxon>Thermococcaceae</taxon>
        <taxon>Pyrococcus</taxon>
    </lineage>
</organism>
<dbReference type="EC" id="3.1.3.18" evidence="2"/>
<dbReference type="EMBL" id="BA000001">
    <property type="protein sequence ID" value="BAA30527.1"/>
    <property type="molecule type" value="Genomic_DNA"/>
</dbReference>
<dbReference type="PIR" id="G71015">
    <property type="entry name" value="G71015"/>
</dbReference>
<dbReference type="RefSeq" id="WP_010885503.1">
    <property type="nucleotide sequence ID" value="NC_000961.1"/>
</dbReference>
<dbReference type="PDB" id="1WR8">
    <property type="method" value="X-ray"/>
    <property type="resolution" value="1.60 A"/>
    <property type="chains" value="A/B=1-231"/>
</dbReference>
<dbReference type="PDBsum" id="1WR8"/>
<dbReference type="SMR" id="O50129"/>
<dbReference type="STRING" id="70601.gene:9378397"/>
<dbReference type="EnsemblBacteria" id="BAA30527">
    <property type="protein sequence ID" value="BAA30527"/>
    <property type="gene ID" value="BAA30527"/>
</dbReference>
<dbReference type="GeneID" id="1443741"/>
<dbReference type="KEGG" id="pho:PH1421"/>
<dbReference type="eggNOG" id="arCOG01213">
    <property type="taxonomic scope" value="Archaea"/>
</dbReference>
<dbReference type="OrthoDB" id="120822at2157"/>
<dbReference type="EvolutionaryTrace" id="O50129"/>
<dbReference type="Proteomes" id="UP000000752">
    <property type="component" value="Chromosome"/>
</dbReference>
<dbReference type="GO" id="GO:0005829">
    <property type="term" value="C:cytosol"/>
    <property type="evidence" value="ECO:0007669"/>
    <property type="project" value="TreeGrafter"/>
</dbReference>
<dbReference type="GO" id="GO:0000287">
    <property type="term" value="F:magnesium ion binding"/>
    <property type="evidence" value="ECO:0007669"/>
    <property type="project" value="InterPro"/>
</dbReference>
<dbReference type="GO" id="GO:0008967">
    <property type="term" value="F:phosphoglycolate phosphatase activity"/>
    <property type="evidence" value="ECO:0007669"/>
    <property type="project" value="UniProtKB-UniRule"/>
</dbReference>
<dbReference type="CDD" id="cd07514">
    <property type="entry name" value="HAD_Pase"/>
    <property type="match status" value="1"/>
</dbReference>
<dbReference type="Gene3D" id="3.90.1070.10">
    <property type="match status" value="1"/>
</dbReference>
<dbReference type="Gene3D" id="3.40.50.1000">
    <property type="entry name" value="HAD superfamily/HAD-like"/>
    <property type="match status" value="1"/>
</dbReference>
<dbReference type="HAMAP" id="MF_01419">
    <property type="entry name" value="GPH_hydrolase_arch"/>
    <property type="match status" value="1"/>
</dbReference>
<dbReference type="InterPro" id="IPR036412">
    <property type="entry name" value="HAD-like_sf"/>
</dbReference>
<dbReference type="InterPro" id="IPR023214">
    <property type="entry name" value="HAD_sf"/>
</dbReference>
<dbReference type="InterPro" id="IPR006382">
    <property type="entry name" value="PGPase"/>
</dbReference>
<dbReference type="NCBIfam" id="TIGR01487">
    <property type="entry name" value="Pglycolate_arch"/>
    <property type="match status" value="1"/>
</dbReference>
<dbReference type="NCBIfam" id="NF002245">
    <property type="entry name" value="PRK01158.1"/>
    <property type="match status" value="1"/>
</dbReference>
<dbReference type="NCBIfam" id="TIGR01482">
    <property type="entry name" value="SPP-subfamily"/>
    <property type="match status" value="1"/>
</dbReference>
<dbReference type="PANTHER" id="PTHR10000:SF8">
    <property type="entry name" value="HAD SUPERFAMILY HYDROLASE-LIKE, TYPE 3"/>
    <property type="match status" value="1"/>
</dbReference>
<dbReference type="PANTHER" id="PTHR10000">
    <property type="entry name" value="PHOSPHOSERINE PHOSPHATASE"/>
    <property type="match status" value="1"/>
</dbReference>
<dbReference type="Pfam" id="PF08282">
    <property type="entry name" value="Hydrolase_3"/>
    <property type="match status" value="2"/>
</dbReference>
<dbReference type="SFLD" id="SFLDG01140">
    <property type="entry name" value="C2.B:_Phosphomannomutase_and_P"/>
    <property type="match status" value="1"/>
</dbReference>
<dbReference type="SFLD" id="SFLDS00003">
    <property type="entry name" value="Haloacid_Dehalogenase"/>
    <property type="match status" value="1"/>
</dbReference>
<dbReference type="SUPFAM" id="SSF56784">
    <property type="entry name" value="HAD-like"/>
    <property type="match status" value="1"/>
</dbReference>
<accession>O50129</accession>
<proteinExistence type="evidence at protein level"/>
<gene>
    <name type="ordered locus">PH1421</name>
</gene>
<evidence type="ECO:0000250" key="1"/>
<evidence type="ECO:0000255" key="2">
    <source>
        <dbReference type="HAMAP-Rule" id="MF_01419"/>
    </source>
</evidence>
<evidence type="ECO:0000269" key="3">
    <source>
    </source>
</evidence>
<evidence type="ECO:0007829" key="4">
    <source>
        <dbReference type="PDB" id="1WR8"/>
    </source>
</evidence>
<comment type="function">
    <text evidence="2">Catalyzes the dephosphorylation of 2-phosphoglycolate (By similarity). Has phosphatase activity towards p-nitrophenylphosphate (in vitro).</text>
</comment>
<comment type="catalytic activity">
    <reaction evidence="2 3">
        <text>2-phosphoglycolate + H2O = glycolate + phosphate</text>
        <dbReference type="Rhea" id="RHEA:14369"/>
        <dbReference type="ChEBI" id="CHEBI:15377"/>
        <dbReference type="ChEBI" id="CHEBI:29805"/>
        <dbReference type="ChEBI" id="CHEBI:43474"/>
        <dbReference type="ChEBI" id="CHEBI:58033"/>
        <dbReference type="EC" id="3.1.3.18"/>
    </reaction>
</comment>
<comment type="cofactor">
    <cofactor evidence="2 3">
        <name>Mg(2+)</name>
        <dbReference type="ChEBI" id="CHEBI:18420"/>
    </cofactor>
</comment>
<comment type="subunit">
    <text evidence="3">Homodimer.</text>
</comment>
<comment type="similarity">
    <text evidence="2">Belongs to the archaeal SPP-like hydrolase family.</text>
</comment>
<keyword id="KW-0002">3D-structure</keyword>
<keyword id="KW-0119">Carbohydrate metabolism</keyword>
<keyword id="KW-0378">Hydrolase</keyword>
<keyword id="KW-0460">Magnesium</keyword>
<keyword id="KW-0479">Metal-binding</keyword>
<feature type="chain" id="PRO_0000146725" description="Phosphoglycolate phosphatase">
    <location>
        <begin position="1"/>
        <end position="231"/>
    </location>
</feature>
<feature type="active site" description="Nucleophile" evidence="2">
    <location>
        <position position="9"/>
    </location>
</feature>
<feature type="active site" description="Proton donor" evidence="1">
    <location>
        <position position="11"/>
    </location>
</feature>
<feature type="binding site" evidence="2">
    <location>
        <position position="9"/>
    </location>
    <ligand>
        <name>Mg(2+)</name>
        <dbReference type="ChEBI" id="CHEBI:18420"/>
    </ligand>
</feature>
<feature type="binding site" evidence="2">
    <location>
        <position position="11"/>
    </location>
    <ligand>
        <name>Mg(2+)</name>
        <dbReference type="ChEBI" id="CHEBI:18420"/>
    </ligand>
</feature>
<feature type="binding site" evidence="2">
    <location>
        <position position="154"/>
    </location>
    <ligand>
        <name>substrate</name>
    </ligand>
</feature>
<feature type="binding site" evidence="2">
    <location>
        <position position="177"/>
    </location>
    <ligand>
        <name>Mg(2+)</name>
        <dbReference type="ChEBI" id="CHEBI:18420"/>
    </ligand>
</feature>
<feature type="binding site" evidence="2">
    <location>
        <position position="181"/>
    </location>
    <ligand>
        <name>Mg(2+)</name>
        <dbReference type="ChEBI" id="CHEBI:18420"/>
    </ligand>
</feature>
<feature type="strand" evidence="4">
    <location>
        <begin position="5"/>
        <end position="10"/>
    </location>
</feature>
<feature type="turn" evidence="4">
    <location>
        <begin position="11"/>
        <end position="13"/>
    </location>
</feature>
<feature type="helix" evidence="4">
    <location>
        <begin position="23"/>
        <end position="34"/>
    </location>
</feature>
<feature type="strand" evidence="4">
    <location>
        <begin position="39"/>
        <end position="42"/>
    </location>
</feature>
<feature type="helix" evidence="4">
    <location>
        <begin position="47"/>
        <end position="57"/>
    </location>
</feature>
<feature type="strand" evidence="4">
    <location>
        <begin position="63"/>
        <end position="65"/>
    </location>
</feature>
<feature type="helix" evidence="4">
    <location>
        <begin position="66"/>
        <end position="68"/>
    </location>
</feature>
<feature type="strand" evidence="4">
    <location>
        <begin position="70"/>
        <end position="73"/>
    </location>
</feature>
<feature type="strand" evidence="4">
    <location>
        <begin position="76"/>
        <end position="80"/>
    </location>
</feature>
<feature type="helix" evidence="4">
    <location>
        <begin position="85"/>
        <end position="96"/>
    </location>
</feature>
<feature type="helix" evidence="4">
    <location>
        <begin position="106"/>
        <end position="108"/>
    </location>
</feature>
<feature type="strand" evidence="4">
    <location>
        <begin position="113"/>
        <end position="115"/>
    </location>
</feature>
<feature type="turn" evidence="4">
    <location>
        <begin position="117"/>
        <end position="119"/>
    </location>
</feature>
<feature type="helix" evidence="4">
    <location>
        <begin position="122"/>
        <end position="131"/>
    </location>
</feature>
<feature type="strand" evidence="4">
    <location>
        <begin position="137"/>
        <end position="140"/>
    </location>
</feature>
<feature type="strand" evidence="4">
    <location>
        <begin position="145"/>
        <end position="148"/>
    </location>
</feature>
<feature type="helix" evidence="4">
    <location>
        <begin position="154"/>
        <end position="165"/>
    </location>
</feature>
<feature type="helix" evidence="4">
    <location>
        <begin position="169"/>
        <end position="171"/>
    </location>
</feature>
<feature type="strand" evidence="4">
    <location>
        <begin position="172"/>
        <end position="176"/>
    </location>
</feature>
<feature type="helix" evidence="4">
    <location>
        <begin position="179"/>
        <end position="181"/>
    </location>
</feature>
<feature type="helix" evidence="4">
    <location>
        <begin position="182"/>
        <end position="187"/>
    </location>
</feature>
<feature type="strand" evidence="4">
    <location>
        <begin position="188"/>
        <end position="193"/>
    </location>
</feature>
<feature type="helix" evidence="4">
    <location>
        <begin position="199"/>
        <end position="202"/>
    </location>
</feature>
<feature type="strand" evidence="4">
    <location>
        <begin position="206"/>
        <end position="208"/>
    </location>
</feature>
<feature type="helix" evidence="4">
    <location>
        <begin position="213"/>
        <end position="227"/>
    </location>
</feature>